<reference key="1">
    <citation type="submission" date="2004-01" db="EMBL/GenBank/DDBJ databases">
        <authorList>
            <consortium name="NIH - Zebrafish Gene Collection (ZGC) project"/>
        </authorList>
    </citation>
    <scope>NUCLEOTIDE SEQUENCE [LARGE SCALE MRNA]</scope>
    <source>
        <tissue>Kidney</tissue>
    </source>
</reference>
<sequence length="292" mass="31079">MALIEGVGDEVTLLFGVVFLVLVLVLAWASTHTVEPPEHLLSPSPGASPSTETDSQEPLPPGNTDSSPGGVRDEDDKSEPGTEAGAAGQSADGSRAGGGDGGLLDDAGLGSDGLRHRESAGPSTHPPESTPSATQPSAEDAASDTHRNMVLRLKFLNDTERTAQVNPQDTIGYIKRTYFAGQEHQVRLIYQGQLLQDDSQTLASLNLADNSVLHCHISQHATRAMPAGARAADQVHVALNVGSLMVPLFVLMLSVLWYFQIQYRQFFTAPATASLVGITIFFSFVAFGVYRR</sequence>
<protein>
    <recommendedName>
        <fullName>Transmembrane and ubiquitin-like domain-containing protein 1</fullName>
    </recommendedName>
</protein>
<organism>
    <name type="scientific">Danio rerio</name>
    <name type="common">Zebrafish</name>
    <name type="synonym">Brachydanio rerio</name>
    <dbReference type="NCBI Taxonomy" id="7955"/>
    <lineage>
        <taxon>Eukaryota</taxon>
        <taxon>Metazoa</taxon>
        <taxon>Chordata</taxon>
        <taxon>Craniata</taxon>
        <taxon>Vertebrata</taxon>
        <taxon>Euteleostomi</taxon>
        <taxon>Actinopterygii</taxon>
        <taxon>Neopterygii</taxon>
        <taxon>Teleostei</taxon>
        <taxon>Ostariophysi</taxon>
        <taxon>Cypriniformes</taxon>
        <taxon>Danionidae</taxon>
        <taxon>Danioninae</taxon>
        <taxon>Danio</taxon>
    </lineage>
</organism>
<comment type="function">
    <text evidence="1 2">May contribute to the regulation of translation during cell-cycle progression. May contribute to the regulation of cell proliferation (By similarity). The membrane form is involved in sterol-regulated ubiquitination and degradation of HMG-CoA reductase HMGCR. May be involved in centrosome assembly.</text>
</comment>
<comment type="subcellular location">
    <subcellularLocation>
        <location evidence="2 6">Membrane</location>
        <topology evidence="6">Multi-pass membrane protein</topology>
    </subcellularLocation>
    <subcellularLocation>
        <location evidence="2">Cytoplasm</location>
    </subcellularLocation>
    <subcellularLocation>
        <location evidence="2">Nucleus</location>
    </subcellularLocation>
</comment>
<name>TMUB1_DANRE</name>
<feature type="chain" id="PRO_0000370252" description="Transmembrane and ubiquitin-like domain-containing protein 1">
    <location>
        <begin position="1"/>
        <end position="292"/>
    </location>
</feature>
<feature type="transmembrane region" description="Helical" evidence="3">
    <location>
        <begin position="11"/>
        <end position="31"/>
    </location>
</feature>
<feature type="transmembrane region" description="Helical" evidence="3">
    <location>
        <begin position="237"/>
        <end position="257"/>
    </location>
</feature>
<feature type="transmembrane region" description="Helical" evidence="3">
    <location>
        <begin position="269"/>
        <end position="289"/>
    </location>
</feature>
<feature type="domain" description="Ubiquitin-like" evidence="4">
    <location>
        <begin position="149"/>
        <end position="222"/>
    </location>
</feature>
<feature type="region of interest" description="Disordered" evidence="5">
    <location>
        <begin position="34"/>
        <end position="143"/>
    </location>
</feature>
<feature type="compositionally biased region" description="Basic and acidic residues" evidence="5">
    <location>
        <begin position="71"/>
        <end position="80"/>
    </location>
</feature>
<feature type="compositionally biased region" description="Low complexity" evidence="5">
    <location>
        <begin position="84"/>
        <end position="94"/>
    </location>
</feature>
<dbReference type="EMBL" id="BC065312">
    <property type="protein sequence ID" value="AAH65312.1"/>
    <property type="molecule type" value="mRNA"/>
</dbReference>
<dbReference type="RefSeq" id="NP_998463.1">
    <property type="nucleotide sequence ID" value="NM_213298.2"/>
</dbReference>
<dbReference type="SMR" id="Q6P135"/>
<dbReference type="FunCoup" id="Q6P135">
    <property type="interactions" value="2"/>
</dbReference>
<dbReference type="STRING" id="7955.ENSDARP00000056641"/>
<dbReference type="PaxDb" id="7955-ENSDARP00000056641"/>
<dbReference type="Ensembl" id="ENSDART00000056642">
    <property type="protein sequence ID" value="ENSDARP00000056641"/>
    <property type="gene ID" value="ENSDARG00000038787"/>
</dbReference>
<dbReference type="GeneID" id="406589"/>
<dbReference type="KEGG" id="dre:406589"/>
<dbReference type="AGR" id="ZFIN:ZDB-GENE-040426-2504"/>
<dbReference type="CTD" id="83590"/>
<dbReference type="ZFIN" id="ZDB-GENE-040426-2504">
    <property type="gene designation" value="tmub1"/>
</dbReference>
<dbReference type="eggNOG" id="ENOG502QU8U">
    <property type="taxonomic scope" value="Eukaryota"/>
</dbReference>
<dbReference type="HOGENOM" id="CLU_053940_0_0_1"/>
<dbReference type="InParanoid" id="Q6P135"/>
<dbReference type="OMA" id="TLLWYCQ"/>
<dbReference type="OrthoDB" id="161999at2759"/>
<dbReference type="PhylomeDB" id="Q6P135"/>
<dbReference type="TreeFam" id="TF329265"/>
<dbReference type="PRO" id="PR:Q6P135"/>
<dbReference type="Proteomes" id="UP000000437">
    <property type="component" value="Chromosome 2"/>
</dbReference>
<dbReference type="Bgee" id="ENSDARG00000038787">
    <property type="expression patterns" value="Expressed in early embryo and 28 other cell types or tissues"/>
</dbReference>
<dbReference type="GO" id="GO:0005737">
    <property type="term" value="C:cytoplasm"/>
    <property type="evidence" value="ECO:0007669"/>
    <property type="project" value="UniProtKB-SubCell"/>
</dbReference>
<dbReference type="GO" id="GO:0016020">
    <property type="term" value="C:membrane"/>
    <property type="evidence" value="ECO:0007669"/>
    <property type="project" value="UniProtKB-SubCell"/>
</dbReference>
<dbReference type="GO" id="GO:0005634">
    <property type="term" value="C:nucleus"/>
    <property type="evidence" value="ECO:0007669"/>
    <property type="project" value="UniProtKB-SubCell"/>
</dbReference>
<dbReference type="GO" id="GO:0036503">
    <property type="term" value="P:ERAD pathway"/>
    <property type="evidence" value="ECO:0000318"/>
    <property type="project" value="GO_Central"/>
</dbReference>
<dbReference type="CDD" id="cd17131">
    <property type="entry name" value="Ubl_TMUB1"/>
    <property type="match status" value="1"/>
</dbReference>
<dbReference type="Gene3D" id="3.10.20.90">
    <property type="entry name" value="Phosphatidylinositol 3-kinase Catalytic Subunit, Chain A, domain 1"/>
    <property type="match status" value="1"/>
</dbReference>
<dbReference type="InterPro" id="IPR040352">
    <property type="entry name" value="TMUB1/2"/>
</dbReference>
<dbReference type="InterPro" id="IPR000626">
    <property type="entry name" value="Ubiquitin-like_dom"/>
</dbReference>
<dbReference type="InterPro" id="IPR029071">
    <property type="entry name" value="Ubiquitin-like_domsf"/>
</dbReference>
<dbReference type="PANTHER" id="PTHR14557">
    <property type="entry name" value="PROTEIN C7ORF21"/>
    <property type="match status" value="1"/>
</dbReference>
<dbReference type="PANTHER" id="PTHR14557:SF3">
    <property type="entry name" value="TRANSMEMBRANE AND UBIQUITIN-LIKE DOMAIN-CONTAINING PROTEIN 1"/>
    <property type="match status" value="1"/>
</dbReference>
<dbReference type="Pfam" id="PF00240">
    <property type="entry name" value="ubiquitin"/>
    <property type="match status" value="1"/>
</dbReference>
<dbReference type="SMART" id="SM00213">
    <property type="entry name" value="UBQ"/>
    <property type="match status" value="1"/>
</dbReference>
<dbReference type="SUPFAM" id="SSF54236">
    <property type="entry name" value="Ubiquitin-like"/>
    <property type="match status" value="1"/>
</dbReference>
<dbReference type="PROSITE" id="PS50053">
    <property type="entry name" value="UBIQUITIN_2"/>
    <property type="match status" value="1"/>
</dbReference>
<evidence type="ECO:0000250" key="1">
    <source>
        <dbReference type="UniProtKB" id="Q9BVT8"/>
    </source>
</evidence>
<evidence type="ECO:0000250" key="2">
    <source>
        <dbReference type="UniProtKB" id="Q9JMG3"/>
    </source>
</evidence>
<evidence type="ECO:0000255" key="3"/>
<evidence type="ECO:0000255" key="4">
    <source>
        <dbReference type="PROSITE-ProRule" id="PRU00214"/>
    </source>
</evidence>
<evidence type="ECO:0000256" key="5">
    <source>
        <dbReference type="SAM" id="MobiDB-lite"/>
    </source>
</evidence>
<evidence type="ECO:0000305" key="6"/>
<keyword id="KW-0963">Cytoplasm</keyword>
<keyword id="KW-0472">Membrane</keyword>
<keyword id="KW-0539">Nucleus</keyword>
<keyword id="KW-1185">Reference proteome</keyword>
<keyword id="KW-0812">Transmembrane</keyword>
<keyword id="KW-1133">Transmembrane helix</keyword>
<gene>
    <name type="primary">tmub1</name>
    <name type="ORF">zgc:77146</name>
</gene>
<accession>Q6P135</accession>
<proteinExistence type="evidence at transcript level"/>